<reference key="1">
    <citation type="submission" date="2004-03" db="EMBL/GenBank/DDBJ databases">
        <title>Complete coding sequence of GPR152.</title>
        <authorList>
            <person name="Bonner T.I."/>
            <person name="Nagle J.W."/>
            <person name="Kauffman D."/>
        </authorList>
    </citation>
    <scope>NUCLEOTIDE SEQUENCE [MRNA]</scope>
    <source>
        <tissue>Retina</tissue>
    </source>
</reference>
<reference key="2">
    <citation type="journal article" date="2002" name="FEBS Lett.">
        <title>Identification of G protein-coupled receptor genes from the human genome sequence.</title>
        <authorList>
            <person name="Takeda S."/>
            <person name="Kadowaki S."/>
            <person name="Haga T."/>
            <person name="Takaesu H."/>
            <person name="Mitaku S."/>
        </authorList>
    </citation>
    <scope>NUCLEOTIDE SEQUENCE [LARGE SCALE GENOMIC DNA]</scope>
</reference>
<reference key="3">
    <citation type="submission" date="2001-07" db="EMBL/GenBank/DDBJ databases">
        <title>Genome-wide discovery and analysis of human seven transmembrane helix receptor genes.</title>
        <authorList>
            <person name="Suwa M."/>
            <person name="Sato T."/>
            <person name="Okouchi I."/>
            <person name="Arita M."/>
            <person name="Futami K."/>
            <person name="Matsumoto S."/>
            <person name="Tsutsumi S."/>
            <person name="Aburatani H."/>
            <person name="Asai K."/>
            <person name="Akiyama Y."/>
        </authorList>
    </citation>
    <scope>NUCLEOTIDE SEQUENCE [GENOMIC DNA]</scope>
</reference>
<reference key="4">
    <citation type="journal article" date="2004" name="Genome Res.">
        <title>The status, quality, and expansion of the NIH full-length cDNA project: the Mammalian Gene Collection (MGC).</title>
        <authorList>
            <consortium name="The MGC Project Team"/>
        </authorList>
    </citation>
    <scope>NUCLEOTIDE SEQUENCE [LARGE SCALE MRNA]</scope>
</reference>
<reference key="5">
    <citation type="journal article" date="2003" name="Proc. Natl. Acad. Sci. U.S.A.">
        <title>The G protein-coupled receptor repertoires of human and mouse.</title>
        <authorList>
            <person name="Vassilatis D.K."/>
            <person name="Hohmann J.G."/>
            <person name="Zeng H."/>
            <person name="Li F."/>
            <person name="Ranchalis J.E."/>
            <person name="Mortrud M.T."/>
            <person name="Brown A."/>
            <person name="Rodriguez S.S."/>
            <person name="Weller J.R."/>
            <person name="Wright A.C."/>
            <person name="Bergmann J.E."/>
            <person name="Gaitanaris G.A."/>
        </authorList>
    </citation>
    <scope>NUCLEOTIDE SEQUENCE [LARGE SCALE MRNA] OF 94-197</scope>
</reference>
<evidence type="ECO:0000255" key="1"/>
<evidence type="ECO:0000255" key="2">
    <source>
        <dbReference type="PROSITE-ProRule" id="PRU00521"/>
    </source>
</evidence>
<evidence type="ECO:0000256" key="3">
    <source>
        <dbReference type="SAM" id="MobiDB-lite"/>
    </source>
</evidence>
<feature type="chain" id="PRO_0000069635" description="Probable G-protein coupled receptor 152">
    <location>
        <begin position="1"/>
        <end position="470"/>
    </location>
</feature>
<feature type="topological domain" description="Extracellular" evidence="1">
    <location>
        <begin position="1"/>
        <end position="33"/>
    </location>
</feature>
<feature type="transmembrane region" description="Helical; Name=1" evidence="1">
    <location>
        <begin position="34"/>
        <end position="54"/>
    </location>
</feature>
<feature type="topological domain" description="Cytoplasmic" evidence="1">
    <location>
        <begin position="55"/>
        <end position="65"/>
    </location>
</feature>
<feature type="transmembrane region" description="Helical; Name=2" evidence="1">
    <location>
        <begin position="66"/>
        <end position="86"/>
    </location>
</feature>
<feature type="topological domain" description="Extracellular" evidence="1">
    <location>
        <begin position="87"/>
        <end position="105"/>
    </location>
</feature>
<feature type="transmembrane region" description="Helical; Name=3" evidence="1">
    <location>
        <begin position="106"/>
        <end position="126"/>
    </location>
</feature>
<feature type="topological domain" description="Cytoplasmic" evidence="1">
    <location>
        <begin position="127"/>
        <end position="148"/>
    </location>
</feature>
<feature type="transmembrane region" description="Helical; Name=4" evidence="1">
    <location>
        <begin position="149"/>
        <end position="169"/>
    </location>
</feature>
<feature type="topological domain" description="Extracellular" evidence="1">
    <location>
        <begin position="170"/>
        <end position="194"/>
    </location>
</feature>
<feature type="transmembrane region" description="Helical; Name=5" evidence="1">
    <location>
        <begin position="195"/>
        <end position="215"/>
    </location>
</feature>
<feature type="topological domain" description="Cytoplasmic" evidence="1">
    <location>
        <begin position="216"/>
        <end position="257"/>
    </location>
</feature>
<feature type="transmembrane region" description="Helical; Name=6" evidence="1">
    <location>
        <begin position="258"/>
        <end position="278"/>
    </location>
</feature>
<feature type="topological domain" description="Extracellular" evidence="1">
    <location>
        <begin position="279"/>
        <end position="281"/>
    </location>
</feature>
<feature type="transmembrane region" description="Helical; Name=7" evidence="1">
    <location>
        <begin position="282"/>
        <end position="302"/>
    </location>
</feature>
<feature type="topological domain" description="Cytoplasmic" evidence="1">
    <location>
        <begin position="303"/>
        <end position="470"/>
    </location>
</feature>
<feature type="region of interest" description="Disordered" evidence="3">
    <location>
        <begin position="1"/>
        <end position="25"/>
    </location>
</feature>
<feature type="region of interest" description="Disordered" evidence="3">
    <location>
        <begin position="322"/>
        <end position="470"/>
    </location>
</feature>
<feature type="compositionally biased region" description="Polar residues" evidence="3">
    <location>
        <begin position="325"/>
        <end position="335"/>
    </location>
</feature>
<feature type="compositionally biased region" description="Polar residues" evidence="3">
    <location>
        <begin position="348"/>
        <end position="414"/>
    </location>
</feature>
<feature type="compositionally biased region" description="Low complexity" evidence="3">
    <location>
        <begin position="415"/>
        <end position="425"/>
    </location>
</feature>
<feature type="disulfide bond" evidence="2">
    <location>
        <begin position="104"/>
        <end position="182"/>
    </location>
</feature>
<feature type="sequence variant" id="VAR_059323" description="In dbSNP:rs1638559.">
    <original>L</original>
    <variation>V</variation>
    <location>
        <position position="317"/>
    </location>
</feature>
<keyword id="KW-1003">Cell membrane</keyword>
<keyword id="KW-1015">Disulfide bond</keyword>
<keyword id="KW-0297">G-protein coupled receptor</keyword>
<keyword id="KW-0472">Membrane</keyword>
<keyword id="KW-0675">Receptor</keyword>
<keyword id="KW-1185">Reference proteome</keyword>
<keyword id="KW-0807">Transducer</keyword>
<keyword id="KW-0812">Transmembrane</keyword>
<keyword id="KW-1133">Transmembrane helix</keyword>
<gene>
    <name type="primary">GPR152</name>
    <name type="synonym">PGR5</name>
</gene>
<proteinExistence type="evidence at protein level"/>
<accession>Q8TDT2</accession>
<accession>Q0VD88</accession>
<accession>Q86SM0</accession>
<organism>
    <name type="scientific">Homo sapiens</name>
    <name type="common">Human</name>
    <dbReference type="NCBI Taxonomy" id="9606"/>
    <lineage>
        <taxon>Eukaryota</taxon>
        <taxon>Metazoa</taxon>
        <taxon>Chordata</taxon>
        <taxon>Craniata</taxon>
        <taxon>Vertebrata</taxon>
        <taxon>Euteleostomi</taxon>
        <taxon>Mammalia</taxon>
        <taxon>Eutheria</taxon>
        <taxon>Euarchontoglires</taxon>
        <taxon>Primates</taxon>
        <taxon>Haplorrhini</taxon>
        <taxon>Catarrhini</taxon>
        <taxon>Hominidae</taxon>
        <taxon>Homo</taxon>
    </lineage>
</organism>
<dbReference type="EMBL" id="AY569571">
    <property type="protein sequence ID" value="AAS76893.1"/>
    <property type="molecule type" value="mRNA"/>
</dbReference>
<dbReference type="EMBL" id="AB083620">
    <property type="protein sequence ID" value="BAB89333.1"/>
    <property type="molecule type" value="Genomic_DNA"/>
</dbReference>
<dbReference type="EMBL" id="AB065853">
    <property type="protein sequence ID" value="BAC06071.1"/>
    <property type="molecule type" value="Genomic_DNA"/>
</dbReference>
<dbReference type="EMBL" id="BC119779">
    <property type="protein sequence ID" value="AAI19780.1"/>
    <property type="molecule type" value="mRNA"/>
</dbReference>
<dbReference type="EMBL" id="BC122869">
    <property type="protein sequence ID" value="AAI22870.1"/>
    <property type="molecule type" value="mRNA"/>
</dbReference>
<dbReference type="EMBL" id="AY255600">
    <property type="protein sequence ID" value="AAO85112.1"/>
    <property type="molecule type" value="mRNA"/>
</dbReference>
<dbReference type="CCDS" id="CCDS8165.1"/>
<dbReference type="RefSeq" id="NP_996880.1">
    <property type="nucleotide sequence ID" value="NM_206997.1"/>
</dbReference>
<dbReference type="SMR" id="Q8TDT2"/>
<dbReference type="BioGRID" id="133448">
    <property type="interactions" value="198"/>
</dbReference>
<dbReference type="FunCoup" id="Q8TDT2">
    <property type="interactions" value="135"/>
</dbReference>
<dbReference type="IntAct" id="Q8TDT2">
    <property type="interactions" value="190"/>
</dbReference>
<dbReference type="STRING" id="9606.ENSP00000310255"/>
<dbReference type="ChEMBL" id="CHEMBL4523900"/>
<dbReference type="GlyGen" id="Q8TDT2">
    <property type="glycosylation" value="4 sites"/>
</dbReference>
<dbReference type="iPTMnet" id="Q8TDT2"/>
<dbReference type="PhosphoSitePlus" id="Q8TDT2"/>
<dbReference type="BioMuta" id="GPR152"/>
<dbReference type="DMDM" id="48428096"/>
<dbReference type="MassIVE" id="Q8TDT2"/>
<dbReference type="PaxDb" id="9606-ENSP00000310255"/>
<dbReference type="Antibodypedia" id="16520">
    <property type="antibodies" value="156 antibodies from 28 providers"/>
</dbReference>
<dbReference type="DNASU" id="390212"/>
<dbReference type="Ensembl" id="ENST00000312457.2">
    <property type="protein sequence ID" value="ENSP00000310255.2"/>
    <property type="gene ID" value="ENSG00000175514.2"/>
</dbReference>
<dbReference type="GeneID" id="390212"/>
<dbReference type="KEGG" id="hsa:390212"/>
<dbReference type="MANE-Select" id="ENST00000312457.2">
    <property type="protein sequence ID" value="ENSP00000310255.2"/>
    <property type="RefSeq nucleotide sequence ID" value="NM_206997.1"/>
    <property type="RefSeq protein sequence ID" value="NP_996880.1"/>
</dbReference>
<dbReference type="UCSC" id="uc001olm.3">
    <property type="organism name" value="human"/>
</dbReference>
<dbReference type="AGR" id="HGNC:23622"/>
<dbReference type="CTD" id="390212"/>
<dbReference type="GeneCards" id="GPR152"/>
<dbReference type="HGNC" id="HGNC:23622">
    <property type="gene designation" value="GPR152"/>
</dbReference>
<dbReference type="HPA" id="ENSG00000175514">
    <property type="expression patterns" value="Not detected"/>
</dbReference>
<dbReference type="neXtProt" id="NX_Q8TDT2"/>
<dbReference type="OpenTargets" id="ENSG00000175514"/>
<dbReference type="PharmGKB" id="PA134897297"/>
<dbReference type="VEuPathDB" id="HostDB:ENSG00000175514"/>
<dbReference type="eggNOG" id="ENOG502SP7R">
    <property type="taxonomic scope" value="Eukaryota"/>
</dbReference>
<dbReference type="GeneTree" id="ENSGT01030000234639"/>
<dbReference type="HOGENOM" id="CLU_587370_0_0_1"/>
<dbReference type="InParanoid" id="Q8TDT2"/>
<dbReference type="OMA" id="SPFLCLM"/>
<dbReference type="OrthoDB" id="9449262at2759"/>
<dbReference type="PAN-GO" id="Q8TDT2">
    <property type="GO annotations" value="2 GO annotations based on evolutionary models"/>
</dbReference>
<dbReference type="PhylomeDB" id="Q8TDT2"/>
<dbReference type="TreeFam" id="TF338313"/>
<dbReference type="PathwayCommons" id="Q8TDT2"/>
<dbReference type="SignaLink" id="Q8TDT2"/>
<dbReference type="BioGRID-ORCS" id="390212">
    <property type="hits" value="10 hits in 1147 CRISPR screens"/>
</dbReference>
<dbReference type="GeneWiki" id="GPR152"/>
<dbReference type="GenomeRNAi" id="390212"/>
<dbReference type="Pharos" id="Q8TDT2">
    <property type="development level" value="Tbio"/>
</dbReference>
<dbReference type="PRO" id="PR:Q8TDT2"/>
<dbReference type="Proteomes" id="UP000005640">
    <property type="component" value="Chromosome 11"/>
</dbReference>
<dbReference type="RNAct" id="Q8TDT2">
    <property type="molecule type" value="protein"/>
</dbReference>
<dbReference type="Bgee" id="ENSG00000175514">
    <property type="expression patterns" value="Expressed in granulocyte and 8 other cell types or tissues"/>
</dbReference>
<dbReference type="ExpressionAtlas" id="Q8TDT2">
    <property type="expression patterns" value="baseline and differential"/>
</dbReference>
<dbReference type="GO" id="GO:0005886">
    <property type="term" value="C:plasma membrane"/>
    <property type="evidence" value="ECO:0000318"/>
    <property type="project" value="GO_Central"/>
</dbReference>
<dbReference type="GO" id="GO:0004930">
    <property type="term" value="F:G protein-coupled receptor activity"/>
    <property type="evidence" value="ECO:0000318"/>
    <property type="project" value="GO_Central"/>
</dbReference>
<dbReference type="GO" id="GO:0042802">
    <property type="term" value="F:identical protein binding"/>
    <property type="evidence" value="ECO:0000353"/>
    <property type="project" value="IntAct"/>
</dbReference>
<dbReference type="GO" id="GO:0007186">
    <property type="term" value="P:G protein-coupled receptor signaling pathway"/>
    <property type="evidence" value="ECO:0000318"/>
    <property type="project" value="GO_Central"/>
</dbReference>
<dbReference type="FunFam" id="1.20.1070.10:FF:000226">
    <property type="entry name" value="Probable G-protein coupled receptor 152"/>
    <property type="match status" value="1"/>
</dbReference>
<dbReference type="Gene3D" id="1.20.1070.10">
    <property type="entry name" value="Rhodopsin 7-helix transmembrane proteins"/>
    <property type="match status" value="1"/>
</dbReference>
<dbReference type="InterPro" id="IPR000276">
    <property type="entry name" value="GPCR_Rhodpsn"/>
</dbReference>
<dbReference type="InterPro" id="IPR017452">
    <property type="entry name" value="GPCR_Rhodpsn_7TM"/>
</dbReference>
<dbReference type="InterPro" id="IPR026234">
    <property type="entry name" value="MRGPCRFAMILY"/>
</dbReference>
<dbReference type="PANTHER" id="PTHR11334:SF1">
    <property type="entry name" value="G-PROTEIN COUPLED RECEPTOR 152-RELATED"/>
    <property type="match status" value="1"/>
</dbReference>
<dbReference type="PANTHER" id="PTHR11334">
    <property type="entry name" value="MAS-RELATED G-PROTEIN COUPLED RECEPTOR"/>
    <property type="match status" value="1"/>
</dbReference>
<dbReference type="Pfam" id="PF00001">
    <property type="entry name" value="7tm_1"/>
    <property type="match status" value="1"/>
</dbReference>
<dbReference type="PRINTS" id="PR00237">
    <property type="entry name" value="GPCRRHODOPSN"/>
</dbReference>
<dbReference type="SUPFAM" id="SSF81321">
    <property type="entry name" value="Family A G protein-coupled receptor-like"/>
    <property type="match status" value="1"/>
</dbReference>
<dbReference type="PROSITE" id="PS50262">
    <property type="entry name" value="G_PROTEIN_RECEP_F1_2"/>
    <property type="match status" value="1"/>
</dbReference>
<comment type="function">
    <text>Orphan receptor.</text>
</comment>
<comment type="interaction">
    <interactant intactId="EBI-13345167">
        <id>Q8TDT2</id>
    </interactant>
    <interactant intactId="EBI-8584118">
        <id>Q9H172</id>
        <label>ABCG4</label>
    </interactant>
    <organismsDiffer>false</organismsDiffer>
    <experiments>3</experiments>
</comment>
<comment type="interaction">
    <interactant intactId="EBI-13345167">
        <id>Q8TDT2</id>
    </interactant>
    <interactant intactId="EBI-348517">
        <id>O95870</id>
        <label>ABHD16A</label>
    </interactant>
    <organismsDiffer>false</organismsDiffer>
    <experiments>3</experiments>
</comment>
<comment type="interaction">
    <interactant intactId="EBI-13345167">
        <id>Q8TDT2</id>
    </interactant>
    <interactant intactId="EBI-2876502">
        <id>Q96CM8</id>
        <label>ACSF2</label>
    </interactant>
    <organismsDiffer>false</organismsDiffer>
    <experiments>3</experiments>
</comment>
<comment type="interaction">
    <interactant intactId="EBI-13345167">
        <id>Q8TDT2</id>
    </interactant>
    <interactant intactId="EBI-10827839">
        <id>Q15848</id>
        <label>ADIPOQ</label>
    </interactant>
    <organismsDiffer>false</organismsDiffer>
    <experiments>3</experiments>
</comment>
<comment type="interaction">
    <interactant intactId="EBI-13345167">
        <id>Q8TDT2</id>
    </interactant>
    <interactant intactId="EBI-11522760">
        <id>Q6RW13-2</id>
        <label>AGTRAP</label>
    </interactant>
    <organismsDiffer>false</organismsDiffer>
    <experiments>3</experiments>
</comment>
<comment type="interaction">
    <interactant intactId="EBI-13345167">
        <id>Q8TDT2</id>
    </interactant>
    <interactant intactId="EBI-11957045">
        <id>Q9NVV5-2</id>
        <label>AIG1</label>
    </interactant>
    <organismsDiffer>false</organismsDiffer>
    <experiments>3</experiments>
</comment>
<comment type="interaction">
    <interactant intactId="EBI-13345167">
        <id>Q8TDT2</id>
    </interactant>
    <interactant intactId="EBI-12109402">
        <id>Q86W74-2</id>
        <label>ANKRD46</label>
    </interactant>
    <organismsDiffer>false</organismsDiffer>
    <experiments>3</experiments>
</comment>
<comment type="interaction">
    <interactant intactId="EBI-13345167">
        <id>Q8TDT2</id>
    </interactant>
    <interactant intactId="EBI-11976321">
        <id>O95236-2</id>
        <label>APOL3</label>
    </interactant>
    <organismsDiffer>false</organismsDiffer>
    <experiments>3</experiments>
</comment>
<comment type="interaction">
    <interactant intactId="EBI-13345167">
        <id>Q8TDT2</id>
    </interactant>
    <interactant intactId="EBI-12820279">
        <id>Q96PS8</id>
        <label>AQP10</label>
    </interactant>
    <organismsDiffer>false</organismsDiffer>
    <experiments>3</experiments>
</comment>
<comment type="interaction">
    <interactant intactId="EBI-13345167">
        <id>Q8TDT2</id>
    </interactant>
    <interactant intactId="EBI-2808854">
        <id>Q92482</id>
        <label>AQP3</label>
    </interactant>
    <organismsDiffer>false</organismsDiffer>
    <experiments>3</experiments>
</comment>
<comment type="interaction">
    <interactant intactId="EBI-13345167">
        <id>Q8TDT2</id>
    </interactant>
    <interactant intactId="EBI-13059134">
        <id>Q13520</id>
        <label>AQP6</label>
    </interactant>
    <organismsDiffer>false</organismsDiffer>
    <experiments>3</experiments>
</comment>
<comment type="interaction">
    <interactant intactId="EBI-13345167">
        <id>Q8TDT2</id>
    </interactant>
    <interactant intactId="EBI-714543">
        <id>Q15041</id>
        <label>ARL6IP1</label>
    </interactant>
    <organismsDiffer>false</organismsDiffer>
    <experiments>3</experiments>
</comment>
<comment type="interaction">
    <interactant intactId="EBI-13345167">
        <id>Q8TDT2</id>
    </interactant>
    <interactant intactId="EBI-11724186">
        <id>Q9H2C2</id>
        <label>ARV1</label>
    </interactant>
    <organismsDiffer>false</organismsDiffer>
    <experiments>3</experiments>
</comment>
<comment type="interaction">
    <interactant intactId="EBI-13345167">
        <id>Q8TDT2</id>
    </interactant>
    <interactant intactId="EBI-721179">
        <id>P27449</id>
        <label>ATP6V0C</label>
    </interactant>
    <organismsDiffer>false</organismsDiffer>
    <experiments>3</experiments>
</comment>
<comment type="interaction">
    <interactant intactId="EBI-13345167">
        <id>Q8TDT2</id>
    </interactant>
    <interactant intactId="EBI-17211590">
        <id>Q8NFL0</id>
        <label>B3GNT7</label>
    </interactant>
    <organismsDiffer>false</organismsDiffer>
    <experiments>3</experiments>
</comment>
<comment type="interaction">
    <interactant intactId="EBI-13345167">
        <id>Q8TDT2</id>
    </interactant>
    <interactant intactId="EBI-12275524">
        <id>P23560-2</id>
        <label>BDNF</label>
    </interactant>
    <organismsDiffer>false</organismsDiffer>
    <experiments>3</experiments>
</comment>
<comment type="interaction">
    <interactant intactId="EBI-13345167">
        <id>Q8TDT2</id>
    </interactant>
    <interactant intactId="EBI-749204">
        <id>O15155</id>
        <label>BET1</label>
    </interactant>
    <organismsDiffer>false</organismsDiffer>
    <experiments>3</experiments>
</comment>
<comment type="interaction">
    <interactant intactId="EBI-13345167">
        <id>Q8TDT2</id>
    </interactant>
    <interactant intactId="EBI-3922513">
        <id>O95393</id>
        <label>BMP10</label>
    </interactant>
    <organismsDiffer>false</organismsDiffer>
    <experiments>3</experiments>
</comment>
<comment type="interaction">
    <interactant intactId="EBI-13345167">
        <id>Q8TDT2</id>
    </interactant>
    <interactant intactId="EBI-752094">
        <id>Q12982</id>
        <label>BNIP2</label>
    </interactant>
    <organismsDiffer>false</organismsDiffer>
    <experiments>3</experiments>
</comment>
<comment type="interaction">
    <interactant intactId="EBI-13345167">
        <id>Q8TDT2</id>
    </interactant>
    <interactant intactId="EBI-749464">
        <id>Q12983</id>
        <label>BNIP3</label>
    </interactant>
    <organismsDiffer>false</organismsDiffer>
    <experiments>3</experiments>
</comment>
<comment type="interaction">
    <interactant intactId="EBI-13345167">
        <id>Q8TDT2</id>
    </interactant>
    <interactant intactId="EBI-12062109">
        <id>Q86Z23</id>
        <label>C1QL4</label>
    </interactant>
    <organismsDiffer>false</organismsDiffer>
    <experiments>3</experiments>
</comment>
<comment type="interaction">
    <interactant intactId="EBI-13345167">
        <id>Q8TDT2</id>
    </interactant>
    <interactant intactId="EBI-9021639">
        <id>P07357</id>
        <label>C8A</label>
    </interactant>
    <organismsDiffer>false</organismsDiffer>
    <experiments>3</experiments>
</comment>
<comment type="interaction">
    <interactant intactId="EBI-13345167">
        <id>Q8TDT2</id>
    </interactant>
    <interactant intactId="EBI-9083477">
        <id>Q9P0B6</id>
        <label>CCDC167</label>
    </interactant>
    <organismsDiffer>false</organismsDiffer>
    <experiments>3</experiments>
</comment>
<comment type="interaction">
    <interactant intactId="EBI-13345167">
        <id>Q8TDT2</id>
    </interactant>
    <interactant intactId="EBI-2873970">
        <id>P13236</id>
        <label>CCL4</label>
    </interactant>
    <organismsDiffer>false</organismsDiffer>
    <experiments>3</experiments>
</comment>
<comment type="interaction">
    <interactant intactId="EBI-13345167">
        <id>Q8TDT2</id>
    </interactant>
    <interactant intactId="EBI-10271156">
        <id>Q8NHW4</id>
        <label>CCL4L2</label>
    </interactant>
    <organismsDiffer>false</organismsDiffer>
    <experiments>3</experiments>
</comment>
<comment type="interaction">
    <interactant intactId="EBI-13345167">
        <id>Q8TDT2</id>
    </interactant>
    <interactant intactId="EBI-6657396">
        <id>P19397</id>
        <label>CD53</label>
    </interactant>
    <organismsDiffer>false</organismsDiffer>
    <experiments>3</experiments>
</comment>
<comment type="interaction">
    <interactant intactId="EBI-13345167">
        <id>Q8TDT2</id>
    </interactant>
    <interactant intactId="EBI-307924">
        <id>P21854</id>
        <label>CD72</label>
    </interactant>
    <organismsDiffer>false</organismsDiffer>
    <experiments>3</experiments>
</comment>
<comment type="interaction">
    <interactant intactId="EBI-13345167">
        <id>Q8TDT2</id>
    </interactant>
    <interactant intactId="EBI-712921">
        <id>P60033</id>
        <label>CD81</label>
    </interactant>
    <organismsDiffer>false</organismsDiffer>
    <experiments>3</experiments>
</comment>
<comment type="interaction">
    <interactant intactId="EBI-13345167">
        <id>Q8TDT2</id>
    </interactant>
    <interactant intactId="EBI-358858">
        <id>O14735</id>
        <label>CDIPT</label>
    </interactant>
    <organismsDiffer>false</organismsDiffer>
    <experiments>3</experiments>
</comment>
<comment type="interaction">
    <interactant intactId="EBI-13345167">
        <id>Q8TDT2</id>
    </interactant>
    <interactant intactId="EBI-3913685">
        <id>O95674</id>
        <label>CDS2</label>
    </interactant>
    <organismsDiffer>false</organismsDiffer>
    <experiments>3</experiments>
</comment>
<comment type="interaction">
    <interactant intactId="EBI-13345167">
        <id>Q8TDT2</id>
    </interactant>
    <interactant intactId="EBI-2130213">
        <id>Q99675</id>
        <label>CGRRF1</label>
    </interactant>
    <organismsDiffer>false</organismsDiffer>
    <experiments>3</experiments>
</comment>
<comment type="interaction">
    <interactant intactId="EBI-13345167">
        <id>Q8TDT2</id>
    </interactant>
    <interactant intactId="EBI-11959453">
        <id>Q8NHS1</id>
        <label>CLDND2</label>
    </interactant>
    <organismsDiffer>false</organismsDiffer>
    <experiments>3</experiments>
</comment>
<comment type="interaction">
    <interactant intactId="EBI-13345167">
        <id>Q8TDT2</id>
    </interactant>
    <interactant intactId="EBI-11977093">
        <id>Q6ZS10</id>
        <label>CLEC17A</label>
    </interactant>
    <organismsDiffer>false</organismsDiffer>
    <experiments>3</experiments>
</comment>
<comment type="interaction">
    <interactant intactId="EBI-13345167">
        <id>Q8TDT2</id>
    </interactant>
    <interactant intactId="EBI-11996768">
        <id>Q8NC01</id>
        <label>CLEC1A</label>
    </interactant>
    <organismsDiffer>false</organismsDiffer>
    <experiments>3</experiments>
</comment>
<comment type="interaction">
    <interactant intactId="EBI-13345167">
        <id>Q8TDT2</id>
    </interactant>
    <interactant intactId="EBI-1043514">
        <id>O75503</id>
        <label>CLN5</label>
    </interactant>
    <organismsDiffer>false</organismsDiffer>
    <experiments>3</experiments>
</comment>
<comment type="interaction">
    <interactant intactId="EBI-13345167">
        <id>Q8TDT2</id>
    </interactant>
    <interactant intactId="EBI-12172273">
        <id>O95406</id>
        <label>CNIH1</label>
    </interactant>
    <organismsDiffer>false</organismsDiffer>
    <experiments>3</experiments>
</comment>
<comment type="interaction">
    <interactant intactId="EBI-13345167">
        <id>Q8TDT2</id>
    </interactant>
    <interactant intactId="EBI-10241815">
        <id>Q4VAQ0</id>
        <label>COL8A2</label>
    </interactant>
    <organismsDiffer>false</organismsDiffer>
    <experiments>3</experiments>
</comment>
<comment type="interaction">
    <interactant intactId="EBI-13345167">
        <id>Q8TDT2</id>
    </interactant>
    <interactant intactId="EBI-372265">
        <id>P21964</id>
        <label>COMT</label>
    </interactant>
    <organismsDiffer>false</organismsDiffer>
    <experiments>3</experiments>
</comment>
<comment type="interaction">
    <interactant intactId="EBI-13345167">
        <id>Q8TDT2</id>
    </interactant>
    <interactant intactId="EBI-18210151">
        <id>P54108-2</id>
        <label>CRISP3</label>
    </interactant>
    <organismsDiffer>false</organismsDiffer>
    <experiments>3</experiments>
</comment>
<comment type="interaction">
    <interactant intactId="EBI-13345167">
        <id>Q8TDT2</id>
    </interactant>
    <interactant intactId="EBI-10267100">
        <id>Q8N6G5</id>
        <label>CSGALNACT2</label>
    </interactant>
    <organismsDiffer>false</organismsDiffer>
    <experiments>3</experiments>
</comment>
<comment type="interaction">
    <interactant intactId="EBI-13345167">
        <id>Q8TDT2</id>
    </interactant>
    <interactant intactId="EBI-12019274">
        <id>Q4LDR2</id>
        <label>CTXN3</label>
    </interactant>
    <organismsDiffer>false</organismsDiffer>
    <experiments>3</experiments>
</comment>
<comment type="interaction">
    <interactant intactId="EBI-13345167">
        <id>Q8TDT2</id>
    </interactant>
    <interactant intactId="EBI-8646596">
        <id>P49447</id>
        <label>CYB561</label>
    </interactant>
    <organismsDiffer>false</organismsDiffer>
    <experiments>3</experiments>
</comment>
<comment type="interaction">
    <interactant intactId="EBI-13345167">
        <id>Q8TDT2</id>
    </interactant>
    <interactant intactId="EBI-10269179">
        <id>Q8NBI2</id>
        <label>CYB561A3</label>
    </interactant>
    <organismsDiffer>false</organismsDiffer>
    <experiments>3</experiments>
</comment>
<comment type="interaction">
    <interactant intactId="EBI-13345167">
        <id>Q8TDT2</id>
    </interactant>
    <interactant intactId="EBI-1058710">
        <id>O43169</id>
        <label>CYB5B</label>
    </interactant>
    <organismsDiffer>false</organismsDiffer>
    <experiments>3</experiments>
</comment>
<comment type="interaction">
    <interactant intactId="EBI-13345167">
        <id>Q8TDT2</id>
    </interactant>
    <interactant intactId="EBI-1046040">
        <id>P00387</id>
        <label>CYB5R3</label>
    </interactant>
    <organismsDiffer>false</organismsDiffer>
    <experiments>3</experiments>
</comment>
<comment type="interaction">
    <interactant intactId="EBI-13345167">
        <id>Q8TDT2</id>
    </interactant>
    <interactant intactId="EBI-2680384">
        <id>Q9BQA9</id>
        <label>CYBC1</label>
    </interactant>
    <organismsDiffer>false</organismsDiffer>
    <experiments>3</experiments>
</comment>
<comment type="interaction">
    <interactant intactId="EBI-13345167">
        <id>Q8TDT2</id>
    </interactant>
    <interactant intactId="EBI-13346443">
        <id>Q8NET1</id>
        <label>DEFB108B</label>
    </interactant>
    <organismsDiffer>false</organismsDiffer>
    <experiments>3</experiments>
</comment>
<comment type="interaction">
    <interactant intactId="EBI-13345167">
        <id>Q8TDT2</id>
    </interactant>
    <interactant intactId="EBI-12831978">
        <id>Q6ZPD8</id>
        <label>DGAT2L6</label>
    </interactant>
    <organismsDiffer>false</organismsDiffer>
    <experiments>3</experiments>
</comment>
<comment type="interaction">
    <interactant intactId="EBI-13345167">
        <id>Q8TDT2</id>
    </interactant>
    <interactant intactId="EBI-3915253">
        <id>Q15125</id>
        <label>EBP</label>
    </interactant>
    <organismsDiffer>false</organismsDiffer>
    <experiments>3</experiments>
</comment>
<comment type="interaction">
    <interactant intactId="EBI-13345167">
        <id>Q8TDT2</id>
    </interactant>
    <interactant intactId="EBI-10215665">
        <id>P56851</id>
        <label>EDDM3B</label>
    </interactant>
    <organismsDiffer>false</organismsDiffer>
    <experiments>3</experiments>
</comment>
<comment type="interaction">
    <interactant intactId="EBI-13345167">
        <id>Q8TDT2</id>
    </interactant>
    <interactant intactId="EBI-1753674">
        <id>P52803</id>
        <label>EFNA5</label>
    </interactant>
    <organismsDiffer>false</organismsDiffer>
    <experiments>3</experiments>
</comment>
<comment type="interaction">
    <interactant intactId="EBI-13345167">
        <id>Q8TDT2</id>
    </interactant>
    <interactant intactId="EBI-489887">
        <id>P50402</id>
        <label>EMD</label>
    </interactant>
    <organismsDiffer>false</organismsDiffer>
    <experiments>3</experiments>
</comment>
<comment type="interaction">
    <interactant intactId="EBI-13345167">
        <id>Q8TDT2</id>
    </interactant>
    <interactant intactId="EBI-711490">
        <id>Q9UKR5</id>
        <label>ERG28</label>
    </interactant>
    <organismsDiffer>false</organismsDiffer>
    <experiments>3</experiments>
</comment>
<comment type="interaction">
    <interactant intactId="EBI-13345167">
        <id>Q8TDT2</id>
    </interactant>
    <interactant intactId="EBI-11337888">
        <id>Q7L5A8</id>
        <label>FA2H</label>
    </interactant>
    <organismsDiffer>false</organismsDiffer>
    <experiments>3</experiments>
</comment>
<comment type="interaction">
    <interactant intactId="EBI-13345167">
        <id>Q8TDT2</id>
    </interactant>
    <interactant intactId="EBI-11090967">
        <id>O75063</id>
        <label>FAM20B</label>
    </interactant>
    <organismsDiffer>false</organismsDiffer>
    <experiments>3</experiments>
</comment>
<comment type="interaction">
    <interactant intactId="EBI-13345167">
        <id>Q8TDT2</id>
    </interactant>
    <interactant intactId="EBI-12142299">
        <id>Q96IV6</id>
        <label>FAXDC2</label>
    </interactant>
    <organismsDiffer>false</organismsDiffer>
    <experiments>3</experiments>
</comment>
<comment type="interaction">
    <interactant intactId="EBI-13345167">
        <id>Q8TDT2</id>
    </interactant>
    <interactant intactId="EBI-714550">
        <id>P37268</id>
        <label>FDFT1</label>
    </interactant>
    <organismsDiffer>false</organismsDiffer>
    <experiments>3</experiments>
</comment>
<comment type="interaction">
    <interactant intactId="EBI-13345167">
        <id>Q8TDT2</id>
    </interactant>
    <interactant intactId="EBI-714482">
        <id>Q9BWH2</id>
        <label>FUNDC2</label>
    </interactant>
    <organismsDiffer>false</organismsDiffer>
    <experiments>3</experiments>
</comment>
<comment type="interaction">
    <interactant intactId="EBI-13345167">
        <id>Q8TDT2</id>
    </interactant>
    <interactant intactId="EBI-12175685">
        <id>Q14802-3</id>
        <label>FXYD3</label>
    </interactant>
    <organismsDiffer>false</organismsDiffer>
    <experiments>3</experiments>
</comment>
<comment type="interaction">
    <interactant intactId="EBI-13345167">
        <id>Q8TDT2</id>
    </interactant>
    <interactant intactId="EBI-3436637">
        <id>P01350</id>
        <label>GAST</label>
    </interactant>
    <organismsDiffer>false</organismsDiffer>
    <experiments>3</experiments>
</comment>
<comment type="interaction">
    <interactant intactId="EBI-13345167">
        <id>Q8TDT2</id>
    </interactant>
    <interactant intactId="EBI-3905204">
        <id>P29033</id>
        <label>GJB2</label>
    </interactant>
    <organismsDiffer>false</organismsDiffer>
    <experiments>3</experiments>
</comment>
<comment type="interaction">
    <interactant intactId="EBI-13345167">
        <id>Q8TDT2</id>
    </interactant>
    <interactant intactId="EBI-17231387">
        <id>Q6ZVE7</id>
        <label>GOLT1A</label>
    </interactant>
    <organismsDiffer>false</organismsDiffer>
    <experiments>3</experiments>
</comment>
<comment type="interaction">
    <interactant intactId="EBI-13345167">
        <id>Q8TDT2</id>
    </interactant>
    <interactant intactId="EBI-4402607">
        <id>Q9Y3E0</id>
        <label>GOLT1B</label>
    </interactant>
    <organismsDiffer>false</organismsDiffer>
    <experiments>3</experiments>
</comment>
<comment type="interaction">
    <interactant intactId="EBI-13345167">
        <id>Q8TDT2</id>
    </interactant>
    <interactant intactId="EBI-4401517">
        <id>O14653</id>
        <label>GOSR2</label>
    </interactant>
    <organismsDiffer>false</organismsDiffer>
    <experiments>3</experiments>
</comment>
<comment type="interaction">
    <interactant intactId="EBI-13345167">
        <id>Q8TDT2</id>
    </interactant>
    <interactant intactId="EBI-11955647">
        <id>Q8TDV0</id>
        <label>GPR151</label>
    </interactant>
    <organismsDiffer>false</organismsDiffer>
    <experiments>3</experiments>
</comment>
<comment type="interaction">
    <interactant intactId="EBI-13345167">
        <id>Q8TDT2</id>
    </interactant>
    <interactant intactId="EBI-13345167">
        <id>Q8TDT2</id>
        <label>GPR152</label>
    </interactant>
    <organismsDiffer>false</organismsDiffer>
    <experiments>3</experiments>
</comment>
<comment type="interaction">
    <interactant intactId="EBI-13345167">
        <id>Q8TDT2</id>
    </interactant>
    <interactant intactId="EBI-2927498">
        <id>O60883</id>
        <label>GPR37L1</label>
    </interactant>
    <organismsDiffer>false</organismsDiffer>
    <experiments>3</experiments>
</comment>
<comment type="interaction">
    <interactant intactId="EBI-13345167">
        <id>Q8TDT2</id>
    </interactant>
    <interactant intactId="EBI-5916693">
        <id>Q9HCP6</id>
        <label>HHATL</label>
    </interactant>
    <organismsDiffer>false</organismsDiffer>
    <experiments>3</experiments>
</comment>
<comment type="interaction">
    <interactant intactId="EBI-13345167">
        <id>Q8TDT2</id>
    </interactant>
    <interactant intactId="EBI-2806151">
        <id>P09601</id>
        <label>HMOX1</label>
    </interactant>
    <organismsDiffer>false</organismsDiffer>
    <experiments>3</experiments>
</comment>
<comment type="interaction">
    <interactant intactId="EBI-13345167">
        <id>Q8TDT2</id>
    </interactant>
    <interactant intactId="EBI-712096">
        <id>P30519</id>
        <label>HMOX2</label>
    </interactant>
    <organismsDiffer>false</organismsDiffer>
    <experiments>3</experiments>
</comment>
<comment type="interaction">
    <interactant intactId="EBI-13345167">
        <id>Q8TDT2</id>
    </interactant>
    <interactant intactId="EBI-18211524">
        <id>P32881</id>
        <label>IFNA8</label>
    </interactant>
    <organismsDiffer>false</organismsDiffer>
    <experiments>3</experiments>
</comment>
<comment type="interaction">
    <interactant intactId="EBI-13345167">
        <id>Q8TDT2</id>
    </interactant>
    <interactant intactId="EBI-13334485">
        <id>P01344-3</id>
        <label>IGF2</label>
    </interactant>
    <organismsDiffer>false</organismsDiffer>
    <experiments>3</experiments>
</comment>
<comment type="interaction">
    <interactant intactId="EBI-13345167">
        <id>Q8TDT2</id>
    </interactant>
    <interactant intactId="EBI-720480">
        <id>P24593</id>
        <label>IGFBP5</label>
    </interactant>
    <organismsDiffer>false</organismsDiffer>
    <experiments>3</experiments>
</comment>
<comment type="interaction">
    <interactant intactId="EBI-13345167">
        <id>Q8TDT2</id>
    </interactant>
    <interactant intactId="EBI-12838366">
        <id>Q01638-2</id>
        <label>IL1RL1</label>
    </interactant>
    <organismsDiffer>false</organismsDiffer>
    <experiments>3</experiments>
</comment>
<comment type="interaction">
    <interactant intactId="EBI-13345167">
        <id>Q8TDT2</id>
    </interactant>
    <interactant intactId="EBI-8503746">
        <id>Q9Y5U4</id>
        <label>INSIG2</label>
    </interactant>
    <organismsDiffer>false</organismsDiffer>
    <experiments>3</experiments>
</comment>
<comment type="interaction">
    <interactant intactId="EBI-13345167">
        <id>Q8TDT2</id>
    </interactant>
    <interactant intactId="EBI-10266796">
        <id>Q8N5M9</id>
        <label>JAGN1</label>
    </interactant>
    <organismsDiffer>false</organismsDiffer>
    <experiments>3</experiments>
</comment>
<comment type="interaction">
    <interactant intactId="EBI-13345167">
        <id>Q8TDT2</id>
    </interactant>
    <interactant intactId="EBI-8286599">
        <id>Q09470</id>
        <label>KCNA1</label>
    </interactant>
    <organismsDiffer>false</organismsDiffer>
    <experiments>3</experiments>
</comment>
<comment type="interaction">
    <interactant intactId="EBI-13345167">
        <id>Q8TDT2</id>
    </interactant>
    <interactant intactId="EBI-2924473">
        <id>O15554</id>
        <label>KCNN4</label>
    </interactant>
    <organismsDiffer>false</organismsDiffer>
    <experiments>3</experiments>
</comment>
<comment type="interaction">
    <interactant intactId="EBI-13345167">
        <id>Q8TDT2</id>
    </interactant>
    <interactant intactId="EBI-949174">
        <id>P07942</id>
        <label>LAMB1</label>
    </interactant>
    <organismsDiffer>false</organismsDiffer>
    <experiments>3</experiments>
</comment>
<comment type="interaction">
    <interactant intactId="EBI-13345167">
        <id>Q8TDT2</id>
    </interactant>
    <interactant intactId="EBI-8070286">
        <id>O43561-2</id>
        <label>LAT</label>
    </interactant>
    <organismsDiffer>false</organismsDiffer>
    <experiments>3</experiments>
</comment>
<comment type="interaction">
    <interactant intactId="EBI-13345167">
        <id>Q8TDT2</id>
    </interactant>
    <interactant intactId="EBI-750776">
        <id>O95214</id>
        <label>LEPROTL1</label>
    </interactant>
    <organismsDiffer>false</organismsDiffer>
    <experiments>3</experiments>
</comment>
<comment type="interaction">
    <interactant intactId="EBI-13345167">
        <id>Q8TDT2</id>
    </interactant>
    <interactant intactId="EBI-17566767">
        <id>Q6ZUX7</id>
        <label>LHFPL2</label>
    </interactant>
    <organismsDiffer>false</organismsDiffer>
    <experiments>3</experiments>
</comment>
<comment type="interaction">
    <interactant intactId="EBI-13345167">
        <id>Q8TDT2</id>
    </interactant>
    <interactant intactId="EBI-2820517">
        <id>Q8TAF8</id>
        <label>LHFPL5</label>
    </interactant>
    <organismsDiffer>false</organismsDiffer>
    <experiments>3</experiments>
</comment>
<comment type="interaction">
    <interactant intactId="EBI-13345167">
        <id>Q8TDT2</id>
    </interactant>
    <interactant intactId="EBI-12241118">
        <id>Q16873</id>
        <label>LTC4S</label>
    </interactant>
    <organismsDiffer>false</organismsDiffer>
    <experiments>3</experiments>
</comment>
<comment type="interaction">
    <interactant intactId="EBI-13345167">
        <id>Q8TDT2</id>
    </interactant>
    <interactant intactId="EBI-3932027">
        <id>P21145</id>
        <label>MAL</label>
    </interactant>
    <organismsDiffer>false</organismsDiffer>
    <experiments>3</experiments>
</comment>
<comment type="interaction">
    <interactant intactId="EBI-13345167">
        <id>Q8TDT2</id>
    </interactant>
    <interactant intactId="EBI-944295">
        <id>Q969L2</id>
        <label>MAL2</label>
    </interactant>
    <organismsDiffer>false</organismsDiffer>
    <experiments>3</experiments>
</comment>
<comment type="interaction">
    <interactant intactId="EBI-13345167">
        <id>Q8TDT2</id>
    </interactant>
    <interactant intactId="EBI-11956541">
        <id>Q9GZY8-5</id>
        <label>MFF</label>
    </interactant>
    <organismsDiffer>false</organismsDiffer>
    <experiments>3</experiments>
</comment>
<comment type="interaction">
    <interactant intactId="EBI-13345167">
        <id>Q8TDT2</id>
    </interactant>
    <interactant intactId="EBI-3920969">
        <id>Q6N075</id>
        <label>MFSD5</label>
    </interactant>
    <organismsDiffer>false</organismsDiffer>
    <experiments>3</experiments>
</comment>
<comment type="interaction">
    <interactant intactId="EBI-13345167">
        <id>Q8TDT2</id>
    </interactant>
    <interactant intactId="EBI-2858252">
        <id>Q6ZSS7</id>
        <label>MFSD6</label>
    </interactant>
    <organismsDiffer>false</organismsDiffer>
    <experiments>3</experiments>
</comment>
<comment type="interaction">
    <interactant intactId="EBI-13345167">
        <id>Q8TDT2</id>
    </interactant>
    <interactant intactId="EBI-12866138">
        <id>A0A0C4DFN3</id>
        <label>MGLL</label>
    </interactant>
    <organismsDiffer>false</organismsDiffer>
    <experiments>3</experiments>
</comment>
<comment type="interaction">
    <interactant intactId="EBI-13345167">
        <id>Q8TDT2</id>
    </interactant>
    <interactant intactId="EBI-724754">
        <id>O14880</id>
        <label>MGST3</label>
    </interactant>
    <organismsDiffer>false</organismsDiffer>
    <experiments>3</experiments>
</comment>
<comment type="interaction">
    <interactant intactId="EBI-13345167">
        <id>Q8TDT2</id>
    </interactant>
    <interactant intactId="EBI-17873222">
        <id>Q15546</id>
        <label>MMD</label>
    </interactant>
    <organismsDiffer>false</organismsDiffer>
    <experiments>3</experiments>
</comment>
<comment type="interaction">
    <interactant intactId="EBI-13345167">
        <id>Q8TDT2</id>
    </interactant>
    <interactant intactId="EBI-12179105">
        <id>O75425</id>
        <label>MOSPD3</label>
    </interactant>
    <organismsDiffer>false</organismsDiffer>
    <experiments>3</experiments>
</comment>
<comment type="interaction">
    <interactant intactId="EBI-13345167">
        <id>Q8TDT2</id>
    </interactant>
    <interactant intactId="EBI-12070086">
        <id>Q5J8X5</id>
        <label>MS4A13</label>
    </interactant>
    <organismsDiffer>false</organismsDiffer>
    <experiments>3</experiments>
</comment>
<comment type="interaction">
    <interactant intactId="EBI-13345167">
        <id>Q8TDT2</id>
    </interactant>
    <interactant intactId="EBI-17641390">
        <id>A6NDP7</id>
        <label>MYADML2</label>
    </interactant>
    <organismsDiffer>false</organismsDiffer>
    <experiments>3</experiments>
</comment>
<comment type="interaction">
    <interactant intactId="EBI-13345167">
        <id>Q8TDT2</id>
    </interactant>
    <interactant intactId="EBI-2863634">
        <id>Q9UHE5</id>
        <label>NAT8</label>
    </interactant>
    <organismsDiffer>false</organismsDiffer>
    <experiments>3</experiments>
</comment>
<comment type="interaction">
    <interactant intactId="EBI-13345167">
        <id>Q8TDT2</id>
    </interactant>
    <interactant intactId="EBI-1246182">
        <id>Q9NX14</id>
        <label>NDUFB11</label>
    </interactant>
    <organismsDiffer>false</organismsDiffer>
    <experiments>3</experiments>
</comment>
<comment type="interaction">
    <interactant intactId="EBI-13345167">
        <id>Q8TDT2</id>
    </interactant>
    <interactant intactId="EBI-721517">
        <id>Q99519</id>
        <label>NEU1</label>
    </interactant>
    <organismsDiffer>false</organismsDiffer>
    <experiments>3</experiments>
</comment>
<comment type="interaction">
    <interactant intactId="EBI-13345167">
        <id>Q8TDT2</id>
    </interactant>
    <interactant intactId="EBI-10317425">
        <id>Q9NZG7</id>
        <label>NINJ2</label>
    </interactant>
    <organismsDiffer>false</organismsDiffer>
    <experiments>3</experiments>
</comment>
<comment type="interaction">
    <interactant intactId="EBI-13345167">
        <id>Q8TDT2</id>
    </interactant>
    <interactant intactId="EBI-9550165">
        <id>Q0D2K0</id>
        <label>NIPAL4</label>
    </interactant>
    <organismsDiffer>false</organismsDiffer>
    <experiments>3</experiments>
</comment>
<comment type="interaction">
    <interactant intactId="EBI-13345167">
        <id>Q8TDT2</id>
    </interactant>
    <interactant intactId="EBI-12051377">
        <id>Q8N912</id>
        <label>NRAC</label>
    </interactant>
    <organismsDiffer>false</organismsDiffer>
    <experiments>3</experiments>
</comment>
<comment type="interaction">
    <interactant intactId="EBI-13345167">
        <id>Q8TDT2</id>
    </interactant>
    <interactant intactId="EBI-1054848">
        <id>Q9P0S3</id>
        <label>ORMDL1</label>
    </interactant>
    <organismsDiffer>false</organismsDiffer>
    <experiments>3</experiments>
</comment>
<comment type="interaction">
    <interactant intactId="EBI-13345167">
        <id>Q8TDT2</id>
    </interactant>
    <interactant intactId="EBI-721750">
        <id>Q8N138</id>
        <label>ORMDL3</label>
    </interactant>
    <organismsDiffer>false</organismsDiffer>
    <experiments>3</experiments>
</comment>
<comment type="interaction">
    <interactant intactId="EBI-13345167">
        <id>Q8TDT2</id>
    </interactant>
    <interactant intactId="EBI-12213001">
        <id>I3L0A0</id>
        <label>PEDS1-UBE2V1</label>
    </interactant>
    <organismsDiffer>false</organismsDiffer>
    <experiments>3</experiments>
</comment>
<comment type="interaction">
    <interactant intactId="EBI-13345167">
        <id>Q8TDT2</id>
    </interactant>
    <interactant intactId="EBI-981985">
        <id>Q9Y5Y5</id>
        <label>PEX16</label>
    </interactant>
    <organismsDiffer>false</organismsDiffer>
    <experiments>3</experiments>
</comment>
<comment type="interaction">
    <interactant intactId="EBI-13345167">
        <id>Q8TDT2</id>
    </interactant>
    <interactant intactId="EBI-12092917">
        <id>Q9UHJ9-5</id>
        <label>PGAP2</label>
    </interactant>
    <organismsDiffer>false</organismsDiffer>
    <experiments>3</experiments>
</comment>
<comment type="interaction">
    <interactant intactId="EBI-13345167">
        <id>Q8TDT2</id>
    </interactant>
    <interactant intactId="EBI-17180304">
        <id>Q07326</id>
        <label>PIGF</label>
    </interactant>
    <organismsDiffer>false</organismsDiffer>
    <experiments>3</experiments>
</comment>
<comment type="interaction">
    <interactant intactId="EBI-13345167">
        <id>Q8TDT2</id>
    </interactant>
    <interactant intactId="EBI-714158">
        <id>Q13526</id>
        <label>PIN1</label>
    </interactant>
    <organismsDiffer>false</organismsDiffer>
    <experiments>3</experiments>
</comment>
<comment type="interaction">
    <interactant intactId="EBI-13345167">
        <id>Q8TDT2</id>
    </interactant>
    <interactant intactId="EBI-692836">
        <id>P26678</id>
        <label>PLN</label>
    </interactant>
    <organismsDiffer>false</organismsDiffer>
    <experiments>3</experiments>
</comment>
<comment type="interaction">
    <interactant intactId="EBI-13345167">
        <id>Q8TDT2</id>
    </interactant>
    <interactant intactId="EBI-8652812">
        <id>P54315</id>
        <label>PNLIPRP1</label>
    </interactant>
    <organismsDiffer>false</organismsDiffer>
    <experiments>3</experiments>
</comment>
<comment type="interaction">
    <interactant intactId="EBI-13345167">
        <id>Q8TDT2</id>
    </interactant>
    <interactant intactId="EBI-2506064">
        <id>O60831</id>
        <label>PRAF2</label>
    </interactant>
    <organismsDiffer>false</organismsDiffer>
    <experiments>3</experiments>
</comment>
<comment type="interaction">
    <interactant intactId="EBI-13345167">
        <id>Q8TDT2</id>
    </interactant>
    <interactant intactId="EBI-18210782">
        <id>Q8N271</id>
        <label>PROM2</label>
    </interactant>
    <organismsDiffer>false</organismsDiffer>
    <experiments>3</experiments>
</comment>
<comment type="interaction">
    <interactant intactId="EBI-13345167">
        <id>Q8TDT2</id>
    </interactant>
    <interactant intactId="EBI-10200782">
        <id>Q16849-3</id>
        <label>PTPRN</label>
    </interactant>
    <organismsDiffer>false</organismsDiffer>
    <experiments>3</experiments>
</comment>
<comment type="interaction">
    <interactant intactId="EBI-13345167">
        <id>Q8TDT2</id>
    </interactant>
    <interactant intactId="EBI-712367">
        <id>Q9UI14</id>
        <label>RABAC1</label>
    </interactant>
    <organismsDiffer>false</organismsDiffer>
    <experiments>3</experiments>
</comment>
<comment type="interaction">
    <interactant intactId="EBI-13345167">
        <id>Q8TDT2</id>
    </interactant>
    <interactant intactId="EBI-3232108">
        <id>Q8N0V3</id>
        <label>RBFA</label>
    </interactant>
    <organismsDiffer>false</organismsDiffer>
    <experiments>3</experiments>
</comment>
<comment type="interaction">
    <interactant intactId="EBI-13345167">
        <id>Q8TDT2</id>
    </interactant>
    <interactant intactId="EBI-14065960">
        <id>Q96HR9-2</id>
        <label>REEP6</label>
    </interactant>
    <organismsDiffer>false</organismsDiffer>
    <experiments>3</experiments>
</comment>
<comment type="interaction">
    <interactant intactId="EBI-13345167">
        <id>Q8TDT2</id>
    </interactant>
    <interactant intactId="EBI-399800">
        <id>Q9HCK4</id>
        <label>ROBO2</label>
    </interactant>
    <organismsDiffer>false</organismsDiffer>
    <experiments>3</experiments>
</comment>
<comment type="interaction">
    <interactant intactId="EBI-13345167">
        <id>Q8TDT2</id>
    </interactant>
    <interactant intactId="EBI-11525735">
        <id>O95197-3</id>
        <label>RTN3</label>
    </interactant>
    <organismsDiffer>false</organismsDiffer>
    <experiments>3</experiments>
</comment>
<comment type="interaction">
    <interactant intactId="EBI-13345167">
        <id>Q8TDT2</id>
    </interactant>
    <interactant intactId="EBI-10244780">
        <id>Q5QGT7</id>
        <label>RTP2</label>
    </interactant>
    <organismsDiffer>false</organismsDiffer>
    <experiments>3</experiments>
</comment>
<comment type="interaction">
    <interactant intactId="EBI-13345167">
        <id>Q8TDT2</id>
    </interactant>
    <interactant intactId="EBI-3917235">
        <id>Q9NTJ5</id>
        <label>SACM1L</label>
    </interactant>
    <organismsDiffer>false</organismsDiffer>
    <experiments>3</experiments>
</comment>
<comment type="interaction">
    <interactant intactId="EBI-13345167">
        <id>Q8TDT2</id>
    </interactant>
    <interactant intactId="EBI-4403649">
        <id>Q969E2</id>
        <label>SCAMP4</label>
    </interactant>
    <organismsDiffer>false</organismsDiffer>
    <experiments>3</experiments>
</comment>
<comment type="interaction">
    <interactant intactId="EBI-13345167">
        <id>Q8TDT2</id>
    </interactant>
    <interactant intactId="EBI-2684237">
        <id>O00767</id>
        <label>SCD</label>
    </interactant>
    <organismsDiffer>false</organismsDiffer>
    <experiments>3</experiments>
</comment>
<comment type="interaction">
    <interactant intactId="EBI-13345167">
        <id>Q8TDT2</id>
    </interactant>
    <interactant intactId="EBI-1058865">
        <id>O75396</id>
        <label>SEC22B</label>
    </interactant>
    <organismsDiffer>false</organismsDiffer>
    <experiments>3</experiments>
</comment>
<comment type="interaction">
    <interactant intactId="EBI-13345167">
        <id>Q8TDT2</id>
    </interactant>
    <interactant intactId="EBI-2115181">
        <id>O75920</id>
        <label>SERF1B</label>
    </interactant>
    <organismsDiffer>false</organismsDiffer>
    <experiments>3</experiments>
</comment>
<comment type="interaction">
    <interactant intactId="EBI-13345167">
        <id>Q8TDT2</id>
    </interactant>
    <interactant intactId="EBI-749270">
        <id>Q8N6R1</id>
        <label>SERP2</label>
    </interactant>
    <organismsDiffer>false</organismsDiffer>
    <experiments>3</experiments>
</comment>
<comment type="interaction">
    <interactant intactId="EBI-13345167">
        <id>Q8TDT2</id>
    </interactant>
    <interactant intactId="EBI-4402330">
        <id>O95562</id>
        <label>SFT2D2</label>
    </interactant>
    <organismsDiffer>false</organismsDiffer>
    <experiments>3</experiments>
</comment>
<comment type="interaction">
    <interactant intactId="EBI-13345167">
        <id>Q8TDT2</id>
    </interactant>
    <interactant intactId="EBI-10197617">
        <id>P11686</id>
        <label>SFTPC</label>
    </interactant>
    <organismsDiffer>false</organismsDiffer>
    <experiments>3</experiments>
</comment>
<comment type="interaction">
    <interactant intactId="EBI-13345167">
        <id>Q8TDT2</id>
    </interactant>
    <interactant intactId="EBI-3923031">
        <id>Q14973</id>
        <label>SLC10A1</label>
    </interactant>
    <organismsDiffer>false</organismsDiffer>
    <experiments>3</experiments>
</comment>
<comment type="interaction">
    <interactant intactId="EBI-13345167">
        <id>Q8TDT2</id>
    </interactant>
    <interactant intactId="EBI-12808018">
        <id>Q9UKG4</id>
        <label>SLC13A4</label>
    </interactant>
    <organismsDiffer>false</organismsDiffer>
    <experiments>3</experiments>
</comment>
<comment type="interaction">
    <interactant intactId="EBI-13345167">
        <id>Q8TDT2</id>
    </interactant>
    <interactant intactId="EBI-10294651">
        <id>Q99726</id>
        <label>SLC30A3</label>
    </interactant>
    <organismsDiffer>false</organismsDiffer>
    <experiments>3</experiments>
</comment>
<comment type="interaction">
    <interactant intactId="EBI-13345167">
        <id>Q8TDT2</id>
    </interactant>
    <interactant intactId="EBI-12363689">
        <id>Q96G79</id>
        <label>SLC35A4</label>
    </interactant>
    <organismsDiffer>false</organismsDiffer>
    <experiments>3</experiments>
</comment>
<comment type="interaction">
    <interactant intactId="EBI-13345167">
        <id>Q8TDT2</id>
    </interactant>
    <interactant intactId="EBI-12147661">
        <id>P78383</id>
        <label>SLC35B1</label>
    </interactant>
    <organismsDiffer>false</organismsDiffer>
    <experiments>3</experiments>
</comment>
<comment type="interaction">
    <interactant intactId="EBI-13345167">
        <id>Q8TDT2</id>
    </interactant>
    <interactant intactId="EBI-10281213">
        <id>Q969S0</id>
        <label>SLC35B4</label>
    </interactant>
    <organismsDiffer>false</organismsDiffer>
    <experiments>3</experiments>
</comment>
<comment type="interaction">
    <interactant intactId="EBI-13345167">
        <id>Q8TDT2</id>
    </interactant>
    <interactant intactId="EBI-17295964">
        <id>Q9NQQ7-3</id>
        <label>SLC35C2</label>
    </interactant>
    <organismsDiffer>false</organismsDiffer>
    <experiments>3</experiments>
</comment>
<comment type="interaction">
    <interactant intactId="EBI-13345167">
        <id>Q8TDT2</id>
    </interactant>
    <interactant intactId="EBI-713484">
        <id>Q8N357</id>
        <label>SLC35F6</label>
    </interactant>
    <organismsDiffer>false</organismsDiffer>
    <experiments>3</experiments>
</comment>
<comment type="interaction">
    <interactant intactId="EBI-13345167">
        <id>Q8TDT2</id>
    </interactant>
    <interactant intactId="EBI-9978441">
        <id>Q9H2H9</id>
        <label>SLC38A1</label>
    </interactant>
    <organismsDiffer>false</organismsDiffer>
    <experiments>3</experiments>
</comment>
<comment type="interaction">
    <interactant intactId="EBI-13345167">
        <id>Q8TDT2</id>
    </interactant>
    <interactant intactId="EBI-10314552">
        <id>Q9NVC3</id>
        <label>SLC38A7</label>
    </interactant>
    <organismsDiffer>false</organismsDiffer>
    <experiments>3</experiments>
</comment>
<comment type="interaction">
    <interactant intactId="EBI-13345167">
        <id>Q8TDT2</id>
    </interactant>
    <interactant intactId="EBI-12898013">
        <id>Q9NP94</id>
        <label>SLC39A2</label>
    </interactant>
    <organismsDiffer>false</organismsDiffer>
    <experiments>3</experiments>
</comment>
<comment type="interaction">
    <interactant intactId="EBI-13345167">
        <id>Q8TDT2</id>
    </interactant>
    <interactant intactId="EBI-12266234">
        <id>Q8IVJ1</id>
        <label>SLC41A1</label>
    </interactant>
    <organismsDiffer>false</organismsDiffer>
    <experiments>3</experiments>
</comment>
<comment type="interaction">
    <interactant intactId="EBI-13345167">
        <id>Q8TDT2</id>
    </interactant>
    <interactant intactId="EBI-12889586">
        <id>Q6ZP29-3</id>
        <label>SLC66A1</label>
    </interactant>
    <organismsDiffer>false</organismsDiffer>
    <experiments>3</experiments>
</comment>
<comment type="interaction">
    <interactant intactId="EBI-13345167">
        <id>Q8TDT2</id>
    </interactant>
    <interactant intactId="EBI-3907610">
        <id>Q8N2U9</id>
        <label>SLC66A2</label>
    </interactant>
    <organismsDiffer>false</organismsDiffer>
    <experiments>3</experiments>
</comment>
<comment type="interaction">
    <interactant intactId="EBI-13345167">
        <id>Q8TDT2</id>
    </interactant>
    <interactant intactId="EBI-4289564">
        <id>P30825</id>
        <label>SLC7A1</label>
    </interactant>
    <organismsDiffer>false</organismsDiffer>
    <experiments>3</experiments>
</comment>
<comment type="interaction">
    <interactant intactId="EBI-13345167">
        <id>Q8TDT2</id>
    </interactant>
    <interactant intactId="EBI-8640191">
        <id>Q9NRQ5</id>
        <label>SMCO4</label>
    </interactant>
    <organismsDiffer>false</organismsDiffer>
    <experiments>3</experiments>
</comment>
<comment type="interaction">
    <interactant intactId="EBI-13345167">
        <id>Q8TDT2</id>
    </interactant>
    <interactant intactId="EBI-738687">
        <id>P02808</id>
        <label>STATH</label>
    </interactant>
    <organismsDiffer>false</organismsDiffer>
    <experiments>3</experiments>
</comment>
<comment type="interaction">
    <interactant intactId="EBI-13345167">
        <id>Q8TDT2</id>
    </interactant>
    <interactant intactId="EBI-9071709">
        <id>P61266</id>
        <label>STX1B</label>
    </interactant>
    <organismsDiffer>false</organismsDiffer>
    <experiments>3</experiments>
</comment>
<comment type="interaction">
    <interactant intactId="EBI-13345167">
        <id>Q8TDT2</id>
    </interactant>
    <interactant intactId="EBI-1394295">
        <id>Q13277</id>
        <label>STX3</label>
    </interactant>
    <organismsDiffer>false</organismsDiffer>
    <experiments>3</experiments>
</comment>
<comment type="interaction">
    <interactant intactId="EBI-13345167">
        <id>Q8TDT2</id>
    </interactant>
    <interactant intactId="EBI-744942">
        <id>Q12846</id>
        <label>STX4</label>
    </interactant>
    <organismsDiffer>false</organismsDiffer>
    <experiments>3</experiments>
</comment>
<comment type="interaction">
    <interactant intactId="EBI-13345167">
        <id>Q8TDT2</id>
    </interactant>
    <interactant intactId="EBI-714206">
        <id>Q13190</id>
        <label>STX5</label>
    </interactant>
    <organismsDiffer>false</organismsDiffer>
    <experiments>3</experiments>
</comment>
<comment type="interaction">
    <interactant intactId="EBI-13345167">
        <id>Q8TDT2</id>
    </interactant>
    <interactant intactId="EBI-727240">
        <id>Q9UNK0</id>
        <label>STX8</label>
    </interactant>
    <organismsDiffer>false</organismsDiffer>
    <experiments>3</experiments>
</comment>
<comment type="interaction">
    <interactant intactId="EBI-13345167">
        <id>Q8TDT2</id>
    </interactant>
    <interactant intactId="EBI-13373352">
        <id>Q9BQS2-2</id>
        <label>SYT15</label>
    </interactant>
    <organismsDiffer>false</organismsDiffer>
    <experiments>3</experiments>
</comment>
<comment type="interaction">
    <interactant intactId="EBI-13345167">
        <id>Q8TDT2</id>
    </interactant>
    <interactant intactId="EBI-747259">
        <id>Q03518</id>
        <label>TAP1</label>
    </interactant>
    <organismsDiffer>false</organismsDiffer>
    <experiments>3</experiments>
</comment>
<comment type="interaction">
    <interactant intactId="EBI-13345167">
        <id>Q8TDT2</id>
    </interactant>
    <interactant intactId="EBI-10329860">
        <id>Q9Y6I9</id>
        <label>TEX264</label>
    </interactant>
    <organismsDiffer>false</organismsDiffer>
    <experiments>3</experiments>
</comment>
<comment type="interaction">
    <interactant intactId="EBI-13345167">
        <id>Q8TDT2</id>
    </interactant>
    <interactant intactId="EBI-355727">
        <id>P02786</id>
        <label>TFRC</label>
    </interactant>
    <organismsDiffer>false</organismsDiffer>
    <experiments>3</experiments>
</comment>
<comment type="interaction">
    <interactant intactId="EBI-13345167">
        <id>Q8TDT2</id>
    </interactant>
    <interactant intactId="EBI-311394">
        <id>Q9C0I4</id>
        <label>THSD7B</label>
    </interactant>
    <organismsDiffer>false</organismsDiffer>
    <experiments>3</experiments>
</comment>
<comment type="interaction">
    <interactant intactId="EBI-13345167">
        <id>Q8TDT2</id>
    </interactant>
    <interactant intactId="EBI-6268651">
        <id>Q9NPL8</id>
        <label>TIMMDC1</label>
    </interactant>
    <organismsDiffer>false</organismsDiffer>
    <experiments>3</experiments>
</comment>
<comment type="interaction">
    <interactant intactId="EBI-13345167">
        <id>Q8TDT2</id>
    </interactant>
    <interactant intactId="EBI-6448756">
        <id>Q96DZ7</id>
        <label>TM4SF19</label>
    </interactant>
    <organismsDiffer>false</organismsDiffer>
    <experiments>3</experiments>
</comment>
<comment type="interaction">
    <interactant intactId="EBI-13345167">
        <id>Q8TDT2</id>
    </interactant>
    <interactant intactId="EBI-8644968">
        <id>Q9NV29</id>
        <label>TMEM100</label>
    </interactant>
    <organismsDiffer>false</organismsDiffer>
    <experiments>3</experiments>
</comment>
<comment type="interaction">
    <interactant intactId="EBI-13345167">
        <id>Q8TDT2</id>
    </interactant>
    <interactant intactId="EBI-10171534">
        <id>A0PK00</id>
        <label>TMEM120B</label>
    </interactant>
    <organismsDiffer>false</organismsDiffer>
    <experiments>3</experiments>
</comment>
<comment type="interaction">
    <interactant intactId="EBI-13345167">
        <id>Q8TDT2</id>
    </interactant>
    <interactant intactId="EBI-10694905">
        <id>Q5BJH2-2</id>
        <label>TMEM128</label>
    </interactant>
    <organismsDiffer>false</organismsDiffer>
    <experiments>3</experiments>
</comment>
<comment type="interaction">
    <interactant intactId="EBI-13345167">
        <id>Q8TDT2</id>
    </interactant>
    <interactant intactId="EBI-2844246">
        <id>Q9NV12</id>
        <label>TMEM140</label>
    </interactant>
    <organismsDiffer>false</organismsDiffer>
    <experiments>3</experiments>
</comment>
<comment type="interaction">
    <interactant intactId="EBI-13345167">
        <id>Q8TDT2</id>
    </interactant>
    <interactant intactId="EBI-8638294">
        <id>Q9NUH8</id>
        <label>TMEM14B</label>
    </interactant>
    <organismsDiffer>false</organismsDiffer>
    <experiments>3</experiments>
</comment>
<comment type="interaction">
    <interactant intactId="EBI-13345167">
        <id>Q8TDT2</id>
    </interactant>
    <interactant intactId="EBI-2339195">
        <id>Q9P0S9</id>
        <label>TMEM14C</label>
    </interactant>
    <organismsDiffer>false</organismsDiffer>
    <experiments>3</experiments>
</comment>
<comment type="interaction">
    <interactant intactId="EBI-13345167">
        <id>Q8TDT2</id>
    </interactant>
    <interactant intactId="EBI-11994282">
        <id>Q5SNT2-2</id>
        <label>TMEM201</label>
    </interactant>
    <organismsDiffer>false</organismsDiffer>
    <experiments>3</experiments>
</comment>
<comment type="interaction">
    <interactant intactId="EBI-13345167">
        <id>Q8TDT2</id>
    </interactant>
    <interactant intactId="EBI-12876824">
        <id>Q9BTX3</id>
        <label>TMEM208</label>
    </interactant>
    <organismsDiffer>false</organismsDiffer>
    <experiments>3</experiments>
</comment>
<comment type="interaction">
    <interactant intactId="EBI-13345167">
        <id>Q8TDT2</id>
    </interactant>
    <interactant intactId="EBI-10173151">
        <id>A2RU14</id>
        <label>TMEM218</label>
    </interactant>
    <organismsDiffer>false</organismsDiffer>
    <experiments>3</experiments>
</comment>
<comment type="interaction">
    <interactant intactId="EBI-13345167">
        <id>Q8TDT2</id>
    </interactant>
    <interactant intactId="EBI-13378608">
        <id>Q5W0B7</id>
        <label>TMEM236</label>
    </interactant>
    <organismsDiffer>false</organismsDiffer>
    <experiments>3</experiments>
</comment>
<comment type="interaction">
    <interactant intactId="EBI-13345167">
        <id>Q8TDT2</id>
    </interactant>
    <interactant intactId="EBI-10982110">
        <id>Q96Q45-2</id>
        <label>TMEM237</label>
    </interactant>
    <organismsDiffer>false</organismsDiffer>
    <experiments>3</experiments>
</comment>
<comment type="interaction">
    <interactant intactId="EBI-13345167">
        <id>Q8TDT2</id>
    </interactant>
    <interactant intactId="EBI-12887458">
        <id>Q9BU79</id>
        <label>TMEM243</label>
    </interactant>
    <organismsDiffer>false</organismsDiffer>
    <experiments>3</experiments>
</comment>
<comment type="interaction">
    <interactant intactId="EBI-13345167">
        <id>Q8TDT2</id>
    </interactant>
    <interactant intactId="EBI-11956809">
        <id>Q8TBM7</id>
        <label>TMEM254</label>
    </interactant>
    <organismsDiffer>false</organismsDiffer>
    <experiments>3</experiments>
</comment>
<comment type="interaction">
    <interactant intactId="EBI-13345167">
        <id>Q8TDT2</id>
    </interactant>
    <interactant intactId="EBI-12038591">
        <id>Q69YG0</id>
        <label>TMEM42</label>
    </interactant>
    <organismsDiffer>false</organismsDiffer>
    <experiments>3</experiments>
</comment>
<comment type="interaction">
    <interactant intactId="EBI-13345167">
        <id>Q8TDT2</id>
    </interactant>
    <interactant intactId="EBI-12366453">
        <id>P56557</id>
        <label>TMEM50B</label>
    </interactant>
    <organismsDiffer>false</organismsDiffer>
    <experiments>3</experiments>
</comment>
<comment type="interaction">
    <interactant intactId="EBI-13345167">
        <id>Q8TDT2</id>
    </interactant>
    <interactant intactId="EBI-3922833">
        <id>Q969K7</id>
        <label>TMEM54</label>
    </interactant>
    <organismsDiffer>false</organismsDiffer>
    <experiments>3</experiments>
</comment>
<comment type="interaction">
    <interactant intactId="EBI-13345167">
        <id>Q8TDT2</id>
    </interactant>
    <interactant intactId="EBI-2852148">
        <id>Q9H2L4</id>
        <label>TMEM60</label>
    </interactant>
    <organismsDiffer>false</organismsDiffer>
    <experiments>3</experiments>
</comment>
<comment type="interaction">
    <interactant intactId="EBI-13345167">
        <id>Q8TDT2</id>
    </interactant>
    <interactant intactId="EBI-12111910">
        <id>Q5BJF2</id>
        <label>TMEM97</label>
    </interactant>
    <organismsDiffer>false</organismsDiffer>
    <experiments>3</experiments>
</comment>
<comment type="interaction">
    <interactant intactId="EBI-13345167">
        <id>Q8TDT2</id>
    </interactant>
    <interactant intactId="EBI-11724433">
        <id>Q6ZT21</id>
        <label>TMPPE</label>
    </interactant>
    <organismsDiffer>false</organismsDiffer>
    <experiments>3</experiments>
</comment>
<comment type="interaction">
    <interactant intactId="EBI-13345167">
        <id>Q8TDT2</id>
    </interactant>
    <interactant intactId="EBI-717441">
        <id>O14798</id>
        <label>TNFRSF10C</label>
    </interactant>
    <organismsDiffer>false</organismsDiffer>
    <experiments>3</experiments>
</comment>
<comment type="interaction">
    <interactant intactId="EBI-13345167">
        <id>Q8TDT2</id>
    </interactant>
    <interactant intactId="EBI-12003468">
        <id>A0AVG3</id>
        <label>TSNARE1</label>
    </interactant>
    <organismsDiffer>false</organismsDiffer>
    <experiments>3</experiments>
</comment>
<comment type="interaction">
    <interactant intactId="EBI-13345167">
        <id>Q8TDT2</id>
    </interactant>
    <interactant intactId="EBI-12045841">
        <id>Q86UF1</id>
        <label>TSPAN33</label>
    </interactant>
    <organismsDiffer>false</organismsDiffer>
    <experiments>3</experiments>
</comment>
<comment type="interaction">
    <interactant intactId="EBI-13345167">
        <id>Q8TDT2</id>
    </interactant>
    <interactant intactId="EBI-1042779">
        <id>P41732</id>
        <label>TSPAN7</label>
    </interactant>
    <organismsDiffer>false</organismsDiffer>
    <experiments>3</experiments>
</comment>
<comment type="interaction">
    <interactant intactId="EBI-13345167">
        <id>Q8TDT2</id>
    </interactant>
    <interactant intactId="EBI-12195249">
        <id>Q5TGU0</id>
        <label>TSPO2</label>
    </interactant>
    <organismsDiffer>false</organismsDiffer>
    <experiments>3</experiments>
</comment>
<comment type="interaction">
    <interactant intactId="EBI-13345167">
        <id>Q8TDT2</id>
    </interactant>
    <interactant intactId="EBI-2819725">
        <id>Q9Y5Z9</id>
        <label>UBIAD1</label>
    </interactant>
    <organismsDiffer>false</organismsDiffer>
    <experiments>3</experiments>
</comment>
<comment type="interaction">
    <interactant intactId="EBI-13345167">
        <id>Q8TDT2</id>
    </interactant>
    <interactant intactId="EBI-7601760">
        <id>Q53HI1</id>
        <label>UNC50</label>
    </interactant>
    <organismsDiffer>false</organismsDiffer>
    <experiments>3</experiments>
</comment>
<comment type="interaction">
    <interactant intactId="EBI-13345167">
        <id>Q8TDT2</id>
    </interactant>
    <interactant intactId="EBI-12097582">
        <id>P23763-3</id>
        <label>VAMP1</label>
    </interactant>
    <organismsDiffer>false</organismsDiffer>
    <experiments>3</experiments>
</comment>
<comment type="interaction">
    <interactant intactId="EBI-13345167">
        <id>Q8TDT2</id>
    </interactant>
    <interactant intactId="EBI-744953">
        <id>O75379</id>
        <label>VAMP4</label>
    </interactant>
    <organismsDiffer>false</organismsDiffer>
    <experiments>3</experiments>
</comment>
<comment type="interaction">
    <interactant intactId="EBI-13345167">
        <id>Q8TDT2</id>
    </interactant>
    <interactant intactId="EBI-10191195">
        <id>O95183</id>
        <label>VAMP5</label>
    </interactant>
    <organismsDiffer>false</organismsDiffer>
    <experiments>3</experiments>
</comment>
<comment type="interaction">
    <interactant intactId="EBI-13345167">
        <id>Q8TDT2</id>
    </interactant>
    <interactant intactId="EBI-6256462">
        <id>Q9BQB6</id>
        <label>VKORC1</label>
    </interactant>
    <organismsDiffer>false</organismsDiffer>
    <experiments>3</experiments>
</comment>
<comment type="interaction">
    <interactant intactId="EBI-13345167">
        <id>Q8TDT2</id>
    </interactant>
    <interactant intactId="EBI-7850136">
        <id>Q9Y548</id>
        <label>YIPF1</label>
    </interactant>
    <organismsDiffer>false</organismsDiffer>
    <experiments>3</experiments>
</comment>
<comment type="interaction">
    <interactant intactId="EBI-13345167">
        <id>Q8TDT2</id>
    </interactant>
    <interactant intactId="EBI-751253">
        <id>Q9BSR8</id>
        <label>YIPF4</label>
    </interactant>
    <organismsDiffer>false</organismsDiffer>
    <experiments>3</experiments>
</comment>
<comment type="interaction">
    <interactant intactId="EBI-13345167">
        <id>Q8TDT2</id>
    </interactant>
    <interactant intactId="EBI-751210">
        <id>Q96EC8</id>
        <label>YIPF6</label>
    </interactant>
    <organismsDiffer>false</organismsDiffer>
    <experiments>3</experiments>
</comment>
<comment type="interaction">
    <interactant intactId="EBI-13345167">
        <id>Q8TDT2</id>
    </interactant>
    <interactant intactId="EBI-12837904">
        <id>Q96MV8</id>
        <label>ZDHHC15</label>
    </interactant>
    <organismsDiffer>false</organismsDiffer>
    <experiments>3</experiments>
</comment>
<comment type="interaction">
    <interactant intactId="EBI-13345167">
        <id>Q8TDT2</id>
    </interactant>
    <interactant intactId="EBI-2857623">
        <id>Q96FB2</id>
    </interactant>
    <organismsDiffer>false</organismsDiffer>
    <experiments>3</experiments>
</comment>
<comment type="subcellular location">
    <subcellularLocation>
        <location>Cell membrane</location>
        <topology>Multi-pass membrane protein</topology>
    </subcellularLocation>
</comment>
<comment type="similarity">
    <text evidence="2">Belongs to the G-protein coupled receptor 1 family.</text>
</comment>
<sequence>MDTTMEADLGATGHRPRTELDDEDSYPQGGWDTVFLVALLLLGLPANGLMAWLAGSQARHGAGTRLALLLLSLALSDFLFLAAAAFQILEIRHGGHWPLGTAACRFYYFLWGVSYSSGLFLLAALSLDRCLLALCPHWYPGHRPVRLPLWVCAGVWVLATLFSVPWLVFPEAAVWWYDLVICLDFWDSEELSLRMLEVLGGFLPFLLLLVCHVLTQATACRTCHRQQQPAACRGFARVARTILSAYVVLRLPYQLAQLLYLAFLWDVYSGYLLWEALVYSDYLILLNSCLSPFLCLMASADLRTLLRSVLSSFAAALCEERPGSFTPTEPQTQLDSEGPTLPEPMAEAQSQMDPVAQPQVNPTLQPRSDPTAQPQLNPTAQPQSDPTAQPQLNLMAQPQSDSVAQPQADTNVQTPAPAASSVPSPCDEASPTPSSHPTPGALEDPATPPASEGESPSSTPPEAAPGAGPT</sequence>
<protein>
    <recommendedName>
        <fullName>Probable G-protein coupled receptor 152</fullName>
    </recommendedName>
    <alternativeName>
        <fullName>G-protein coupled receptor PGR5</fullName>
    </alternativeName>
</protein>
<name>GP152_HUMAN</name>